<protein>
    <recommendedName>
        <fullName evidence="1">Adenylate kinase</fullName>
        <shortName evidence="1">AK</shortName>
        <ecNumber evidence="1">2.7.4.3</ecNumber>
    </recommendedName>
    <alternativeName>
        <fullName evidence="1">ATP-AMP transphosphorylase</fullName>
    </alternativeName>
    <alternativeName>
        <fullName evidence="1">ATP:AMP phosphotransferase</fullName>
    </alternativeName>
    <alternativeName>
        <fullName evidence="1">Adenylate monophosphate kinase</fullName>
    </alternativeName>
</protein>
<gene>
    <name evidence="1" type="primary">adk</name>
    <name type="ordered locus">Sfum_1576</name>
</gene>
<keyword id="KW-0067">ATP-binding</keyword>
<keyword id="KW-0963">Cytoplasm</keyword>
<keyword id="KW-0418">Kinase</keyword>
<keyword id="KW-0479">Metal-binding</keyword>
<keyword id="KW-0545">Nucleotide biosynthesis</keyword>
<keyword id="KW-0547">Nucleotide-binding</keyword>
<keyword id="KW-1185">Reference proteome</keyword>
<keyword id="KW-0808">Transferase</keyword>
<keyword id="KW-0862">Zinc</keyword>
<name>KAD_SYNFM</name>
<accession>A0LIL1</accession>
<organism>
    <name type="scientific">Syntrophobacter fumaroxidans (strain DSM 10017 / MPOB)</name>
    <dbReference type="NCBI Taxonomy" id="335543"/>
    <lineage>
        <taxon>Bacteria</taxon>
        <taxon>Pseudomonadati</taxon>
        <taxon>Thermodesulfobacteriota</taxon>
        <taxon>Syntrophobacteria</taxon>
        <taxon>Syntrophobacterales</taxon>
        <taxon>Syntrophobacteraceae</taxon>
        <taxon>Syntrophobacter</taxon>
    </lineage>
</organism>
<feature type="chain" id="PRO_1000021776" description="Adenylate kinase">
    <location>
        <begin position="1"/>
        <end position="213"/>
    </location>
</feature>
<feature type="region of interest" description="NMP" evidence="1">
    <location>
        <begin position="30"/>
        <end position="59"/>
    </location>
</feature>
<feature type="region of interest" description="LID" evidence="1">
    <location>
        <begin position="126"/>
        <end position="163"/>
    </location>
</feature>
<feature type="binding site" evidence="1">
    <location>
        <begin position="10"/>
        <end position="15"/>
    </location>
    <ligand>
        <name>ATP</name>
        <dbReference type="ChEBI" id="CHEBI:30616"/>
    </ligand>
</feature>
<feature type="binding site" evidence="1">
    <location>
        <position position="31"/>
    </location>
    <ligand>
        <name>AMP</name>
        <dbReference type="ChEBI" id="CHEBI:456215"/>
    </ligand>
</feature>
<feature type="binding site" evidence="1">
    <location>
        <position position="36"/>
    </location>
    <ligand>
        <name>AMP</name>
        <dbReference type="ChEBI" id="CHEBI:456215"/>
    </ligand>
</feature>
<feature type="binding site" evidence="1">
    <location>
        <begin position="57"/>
        <end position="59"/>
    </location>
    <ligand>
        <name>AMP</name>
        <dbReference type="ChEBI" id="CHEBI:456215"/>
    </ligand>
</feature>
<feature type="binding site" evidence="1">
    <location>
        <begin position="85"/>
        <end position="88"/>
    </location>
    <ligand>
        <name>AMP</name>
        <dbReference type="ChEBI" id="CHEBI:456215"/>
    </ligand>
</feature>
<feature type="binding site" evidence="1">
    <location>
        <position position="92"/>
    </location>
    <ligand>
        <name>AMP</name>
        <dbReference type="ChEBI" id="CHEBI:456215"/>
    </ligand>
</feature>
<feature type="binding site" evidence="1">
    <location>
        <position position="127"/>
    </location>
    <ligand>
        <name>ATP</name>
        <dbReference type="ChEBI" id="CHEBI:30616"/>
    </ligand>
</feature>
<feature type="binding site" evidence="1">
    <location>
        <position position="130"/>
    </location>
    <ligand>
        <name>Zn(2+)</name>
        <dbReference type="ChEBI" id="CHEBI:29105"/>
        <note>structural</note>
    </ligand>
</feature>
<feature type="binding site" evidence="1">
    <location>
        <position position="133"/>
    </location>
    <ligand>
        <name>Zn(2+)</name>
        <dbReference type="ChEBI" id="CHEBI:29105"/>
        <note>structural</note>
    </ligand>
</feature>
<feature type="binding site" evidence="1">
    <location>
        <position position="150"/>
    </location>
    <ligand>
        <name>Zn(2+)</name>
        <dbReference type="ChEBI" id="CHEBI:29105"/>
        <note>structural</note>
    </ligand>
</feature>
<feature type="binding site" evidence="1">
    <location>
        <position position="153"/>
    </location>
    <ligand>
        <name>Zn(2+)</name>
        <dbReference type="ChEBI" id="CHEBI:29105"/>
        <note>structural</note>
    </ligand>
</feature>
<feature type="binding site" evidence="1">
    <location>
        <position position="160"/>
    </location>
    <ligand>
        <name>AMP</name>
        <dbReference type="ChEBI" id="CHEBI:456215"/>
    </ligand>
</feature>
<feature type="binding site" evidence="1">
    <location>
        <position position="171"/>
    </location>
    <ligand>
        <name>AMP</name>
        <dbReference type="ChEBI" id="CHEBI:456215"/>
    </ligand>
</feature>
<feature type="binding site" evidence="1">
    <location>
        <position position="199"/>
    </location>
    <ligand>
        <name>ATP</name>
        <dbReference type="ChEBI" id="CHEBI:30616"/>
    </ligand>
</feature>
<reference key="1">
    <citation type="submission" date="2006-10" db="EMBL/GenBank/DDBJ databases">
        <title>Complete sequence of Syntrophobacter fumaroxidans MPOB.</title>
        <authorList>
            <consortium name="US DOE Joint Genome Institute"/>
            <person name="Copeland A."/>
            <person name="Lucas S."/>
            <person name="Lapidus A."/>
            <person name="Barry K."/>
            <person name="Detter J.C."/>
            <person name="Glavina del Rio T."/>
            <person name="Hammon N."/>
            <person name="Israni S."/>
            <person name="Pitluck S."/>
            <person name="Goltsman E.G."/>
            <person name="Martinez M."/>
            <person name="Schmutz J."/>
            <person name="Larimer F."/>
            <person name="Land M."/>
            <person name="Hauser L."/>
            <person name="Kyrpides N."/>
            <person name="Kim E."/>
            <person name="Boone D.R."/>
            <person name="Brockman F."/>
            <person name="Culley D."/>
            <person name="Ferry J."/>
            <person name="Gunsalus R."/>
            <person name="McInerney M.J."/>
            <person name="Morrison M."/>
            <person name="Plugge C."/>
            <person name="Rohlin L."/>
            <person name="Scholten J."/>
            <person name="Sieber J."/>
            <person name="Stams A.J.M."/>
            <person name="Worm P."/>
            <person name="Henstra A.M."/>
            <person name="Richardson P."/>
        </authorList>
    </citation>
    <scope>NUCLEOTIDE SEQUENCE [LARGE SCALE GENOMIC DNA]</scope>
    <source>
        <strain>DSM 10017 / MPOB</strain>
    </source>
</reference>
<proteinExistence type="inferred from homology"/>
<comment type="function">
    <text evidence="1">Catalyzes the reversible transfer of the terminal phosphate group between ATP and AMP. Plays an important role in cellular energy homeostasis and in adenine nucleotide metabolism.</text>
</comment>
<comment type="catalytic activity">
    <reaction evidence="1">
        <text>AMP + ATP = 2 ADP</text>
        <dbReference type="Rhea" id="RHEA:12973"/>
        <dbReference type="ChEBI" id="CHEBI:30616"/>
        <dbReference type="ChEBI" id="CHEBI:456215"/>
        <dbReference type="ChEBI" id="CHEBI:456216"/>
        <dbReference type="EC" id="2.7.4.3"/>
    </reaction>
</comment>
<comment type="pathway">
    <text evidence="1">Purine metabolism; AMP biosynthesis via salvage pathway; AMP from ADP: step 1/1.</text>
</comment>
<comment type="subunit">
    <text evidence="1">Monomer.</text>
</comment>
<comment type="subcellular location">
    <subcellularLocation>
        <location evidence="1">Cytoplasm</location>
    </subcellularLocation>
</comment>
<comment type="domain">
    <text evidence="1">Consists of three domains, a large central CORE domain and two small peripheral domains, NMPbind and LID, which undergo movements during catalysis. The LID domain closes over the site of phosphoryl transfer upon ATP binding. Assembling and dissambling the active center during each catalytic cycle provides an effective means to prevent ATP hydrolysis. Some bacteria have evolved a zinc-coordinating structure that stabilizes the LID domain.</text>
</comment>
<comment type="similarity">
    <text evidence="1">Belongs to the adenylate kinase family.</text>
</comment>
<evidence type="ECO:0000255" key="1">
    <source>
        <dbReference type="HAMAP-Rule" id="MF_00235"/>
    </source>
</evidence>
<dbReference type="EC" id="2.7.4.3" evidence="1"/>
<dbReference type="EMBL" id="CP000478">
    <property type="protein sequence ID" value="ABK17263.1"/>
    <property type="molecule type" value="Genomic_DNA"/>
</dbReference>
<dbReference type="RefSeq" id="WP_011698433.1">
    <property type="nucleotide sequence ID" value="NC_008554.1"/>
</dbReference>
<dbReference type="SMR" id="A0LIL1"/>
<dbReference type="FunCoup" id="A0LIL1">
    <property type="interactions" value="579"/>
</dbReference>
<dbReference type="STRING" id="335543.Sfum_1576"/>
<dbReference type="KEGG" id="sfu:Sfum_1576"/>
<dbReference type="eggNOG" id="COG0563">
    <property type="taxonomic scope" value="Bacteria"/>
</dbReference>
<dbReference type="HOGENOM" id="CLU_032354_1_2_7"/>
<dbReference type="InParanoid" id="A0LIL1"/>
<dbReference type="OrthoDB" id="9805030at2"/>
<dbReference type="UniPathway" id="UPA00588">
    <property type="reaction ID" value="UER00649"/>
</dbReference>
<dbReference type="Proteomes" id="UP000001784">
    <property type="component" value="Chromosome"/>
</dbReference>
<dbReference type="GO" id="GO:0005737">
    <property type="term" value="C:cytoplasm"/>
    <property type="evidence" value="ECO:0007669"/>
    <property type="project" value="UniProtKB-SubCell"/>
</dbReference>
<dbReference type="GO" id="GO:0004017">
    <property type="term" value="F:adenylate kinase activity"/>
    <property type="evidence" value="ECO:0007669"/>
    <property type="project" value="UniProtKB-UniRule"/>
</dbReference>
<dbReference type="GO" id="GO:0005524">
    <property type="term" value="F:ATP binding"/>
    <property type="evidence" value="ECO:0007669"/>
    <property type="project" value="UniProtKB-UniRule"/>
</dbReference>
<dbReference type="GO" id="GO:0008270">
    <property type="term" value="F:zinc ion binding"/>
    <property type="evidence" value="ECO:0007669"/>
    <property type="project" value="UniProtKB-UniRule"/>
</dbReference>
<dbReference type="GO" id="GO:0044209">
    <property type="term" value="P:AMP salvage"/>
    <property type="evidence" value="ECO:0007669"/>
    <property type="project" value="UniProtKB-UniRule"/>
</dbReference>
<dbReference type="CDD" id="cd01428">
    <property type="entry name" value="ADK"/>
    <property type="match status" value="1"/>
</dbReference>
<dbReference type="FunFam" id="3.40.50.300:FF:000106">
    <property type="entry name" value="Adenylate kinase mitochondrial"/>
    <property type="match status" value="1"/>
</dbReference>
<dbReference type="Gene3D" id="3.40.50.300">
    <property type="entry name" value="P-loop containing nucleotide triphosphate hydrolases"/>
    <property type="match status" value="1"/>
</dbReference>
<dbReference type="HAMAP" id="MF_00235">
    <property type="entry name" value="Adenylate_kinase_Adk"/>
    <property type="match status" value="1"/>
</dbReference>
<dbReference type="InterPro" id="IPR006259">
    <property type="entry name" value="Adenyl_kin_sub"/>
</dbReference>
<dbReference type="InterPro" id="IPR000850">
    <property type="entry name" value="Adenylat/UMP-CMP_kin"/>
</dbReference>
<dbReference type="InterPro" id="IPR033690">
    <property type="entry name" value="Adenylat_kinase_CS"/>
</dbReference>
<dbReference type="InterPro" id="IPR007862">
    <property type="entry name" value="Adenylate_kinase_lid-dom"/>
</dbReference>
<dbReference type="InterPro" id="IPR027417">
    <property type="entry name" value="P-loop_NTPase"/>
</dbReference>
<dbReference type="NCBIfam" id="TIGR01351">
    <property type="entry name" value="adk"/>
    <property type="match status" value="1"/>
</dbReference>
<dbReference type="NCBIfam" id="NF001380">
    <property type="entry name" value="PRK00279.1-2"/>
    <property type="match status" value="1"/>
</dbReference>
<dbReference type="NCBIfam" id="NF001381">
    <property type="entry name" value="PRK00279.1-3"/>
    <property type="match status" value="1"/>
</dbReference>
<dbReference type="NCBIfam" id="NF011100">
    <property type="entry name" value="PRK14527.1"/>
    <property type="match status" value="1"/>
</dbReference>
<dbReference type="PANTHER" id="PTHR23359">
    <property type="entry name" value="NUCLEOTIDE KINASE"/>
    <property type="match status" value="1"/>
</dbReference>
<dbReference type="Pfam" id="PF00406">
    <property type="entry name" value="ADK"/>
    <property type="match status" value="1"/>
</dbReference>
<dbReference type="Pfam" id="PF05191">
    <property type="entry name" value="ADK_lid"/>
    <property type="match status" value="1"/>
</dbReference>
<dbReference type="PRINTS" id="PR00094">
    <property type="entry name" value="ADENYLTKNASE"/>
</dbReference>
<dbReference type="SUPFAM" id="SSF52540">
    <property type="entry name" value="P-loop containing nucleoside triphosphate hydrolases"/>
    <property type="match status" value="1"/>
</dbReference>
<dbReference type="PROSITE" id="PS00113">
    <property type="entry name" value="ADENYLATE_KINASE"/>
    <property type="match status" value="1"/>
</dbReference>
<sequence>MNIILLGPPGAGKGTQASRLIGKYAIPQISTGDMLRAALKEGTPLGLEAKKYMDQGALVPDSVVIGLVKERIQKPDCSKGYMLDGFPRNVSQAEALDMMLGELKQRIDGVVCIEVPNKELLGRLTGRRTCRSCGAGFHVMFDPPKTDGKCDKCGGELYQRDDDNEATVSSRLKVYEDQTKPLIDYYEKQGKLRRIDGVGSMDAIFGRITAILG</sequence>